<evidence type="ECO:0000255" key="1">
    <source>
        <dbReference type="PROSITE-ProRule" id="PRU00044"/>
    </source>
</evidence>
<evidence type="ECO:0000255" key="2">
    <source>
        <dbReference type="PROSITE-ProRule" id="PRU00224"/>
    </source>
</evidence>
<evidence type="ECO:0000255" key="3">
    <source>
        <dbReference type="PROSITE-ProRule" id="PRU00228"/>
    </source>
</evidence>
<evidence type="ECO:0000256" key="4">
    <source>
        <dbReference type="SAM" id="MobiDB-lite"/>
    </source>
</evidence>
<evidence type="ECO:0000269" key="5">
    <source>
    </source>
</evidence>
<evidence type="ECO:0000269" key="6">
    <source>
    </source>
</evidence>
<evidence type="ECO:0000269" key="7">
    <source>
    </source>
</evidence>
<evidence type="ECO:0000269" key="8">
    <source>
    </source>
</evidence>
<evidence type="ECO:0000269" key="9">
    <source>
    </source>
</evidence>
<evidence type="ECO:0000269" key="10">
    <source>
    </source>
</evidence>
<evidence type="ECO:0000269" key="11">
    <source>
    </source>
</evidence>
<evidence type="ECO:0000269" key="12">
    <source>
    </source>
</evidence>
<evidence type="ECO:0000305" key="13"/>
<name>DMD_CAEEL</name>
<comment type="function">
    <text evidence="5 7 8 9 10 12">Plays a role in cholinergic transmission and as a functional partner of dystrobrevin (dyb-1), necessary for muscle maintenance. Required for neuronal positioning. May play a role in the localization of slo-1 near dense bodies in the muscle (PubMed:20865173).</text>
</comment>
<comment type="subunit">
    <text evidence="6 10">Component of the dystrophin glycoprotein complex (DGC). Interacts with dyb-1 and stn-1 to form the DGC. Interacts with stn-2.</text>
</comment>
<comment type="interaction">
    <interactant intactId="EBI-446952">
        <id>Q9TW65</id>
    </interactant>
    <interactant intactId="EBI-322698">
        <id>Q9Y048</id>
        <label>dyb-1</label>
    </interactant>
    <organismsDiffer>false</organismsDiffer>
    <experiments>4</experiments>
</comment>
<comment type="subcellular location">
    <subcellularLocation>
        <location>Cell membrane</location>
        <location>Sarcolemma</location>
        <topology>Peripheral membrane protein</topology>
        <orientation>Cytoplasmic side</orientation>
    </subcellularLocation>
    <subcellularLocation>
        <location>Cytoplasm</location>
        <location>Cytoskeleton</location>
    </subcellularLocation>
</comment>
<comment type="alternative products">
    <event type="alternative splicing"/>
    <isoform>
        <id>Q9TW65-1</id>
        <name>a</name>
        <sequence type="displayed"/>
    </isoform>
    <isoform>
        <id>Q9TW65-2</id>
        <name>b</name>
        <sequence type="described" ref="VSP_051614 VSP_051615"/>
    </isoform>
</comment>
<comment type="tissue specificity">
    <text evidence="12">Expressed in body wall, head, pharyngeal and vulval muscles, from late embryogenesis to adulthood (at protein level).</text>
</comment>
<comment type="disruption phenotype">
    <text evidence="5 7 10 12">Mutants display a phenotype of hyperactive locomotion and are hypersensitive to the acetylcholinesterase inhibitor aldicarb and are defective in maintaining neuronal positioning. Dys-1 and hlh-1 double mutants synergistically exhibit progressive myopathy.</text>
</comment>
<feature type="chain" id="PRO_0000076079" description="Dystrophin-1">
    <location>
        <begin position="1"/>
        <end position="3674"/>
    </location>
</feature>
<feature type="domain" description="Calponin-homology (CH)" evidence="1">
    <location>
        <begin position="129"/>
        <end position="234"/>
    </location>
</feature>
<feature type="repeat" description="Spectrin 1">
    <location>
        <begin position="327"/>
        <end position="435"/>
    </location>
</feature>
<feature type="repeat" description="Spectrin 2">
    <location>
        <begin position="436"/>
        <end position="541"/>
    </location>
</feature>
<feature type="repeat" description="Spectrin 3">
    <location>
        <begin position="612"/>
        <end position="656"/>
    </location>
</feature>
<feature type="repeat" description="Spectrin 4">
    <location>
        <begin position="2576"/>
        <end position="2673"/>
    </location>
</feature>
<feature type="repeat" description="Spectrin 5">
    <location>
        <begin position="2725"/>
        <end position="2789"/>
    </location>
</feature>
<feature type="repeat" description="Spectrin 6">
    <location>
        <begin position="2792"/>
        <end position="2905"/>
    </location>
</feature>
<feature type="repeat" description="Spectrin 7">
    <location>
        <begin position="2926"/>
        <end position="3032"/>
    </location>
</feature>
<feature type="domain" description="WW" evidence="2">
    <location>
        <begin position="3047"/>
        <end position="3081"/>
    </location>
</feature>
<feature type="zinc finger region" description="ZZ-type" evidence="3">
    <location>
        <begin position="3301"/>
        <end position="3357"/>
    </location>
</feature>
<feature type="region of interest" description="Disordered" evidence="4">
    <location>
        <begin position="1"/>
        <end position="25"/>
    </location>
</feature>
<feature type="region of interest" description="Actin-binding">
    <location>
        <begin position="30"/>
        <end position="39"/>
    </location>
</feature>
<feature type="region of interest" description="Disordered" evidence="4">
    <location>
        <begin position="265"/>
        <end position="325"/>
    </location>
</feature>
<feature type="region of interest" description="Disordered" evidence="4">
    <location>
        <begin position="655"/>
        <end position="689"/>
    </location>
</feature>
<feature type="region of interest" description="Disordered" evidence="4">
    <location>
        <begin position="968"/>
        <end position="991"/>
    </location>
</feature>
<feature type="region of interest" description="Disordered" evidence="4">
    <location>
        <begin position="1587"/>
        <end position="1606"/>
    </location>
</feature>
<feature type="region of interest" description="Disordered" evidence="4">
    <location>
        <begin position="1796"/>
        <end position="1833"/>
    </location>
</feature>
<feature type="region of interest" description="Disordered" evidence="4">
    <location>
        <begin position="2387"/>
        <end position="2466"/>
    </location>
</feature>
<feature type="region of interest" description="Disordered" evidence="4">
    <location>
        <begin position="3481"/>
        <end position="3522"/>
    </location>
</feature>
<feature type="region of interest" description="Disordered" evidence="4">
    <location>
        <begin position="3568"/>
        <end position="3645"/>
    </location>
</feature>
<feature type="compositionally biased region" description="Basic and acidic residues" evidence="4">
    <location>
        <begin position="11"/>
        <end position="25"/>
    </location>
</feature>
<feature type="compositionally biased region" description="Basic and acidic residues" evidence="4">
    <location>
        <begin position="655"/>
        <end position="674"/>
    </location>
</feature>
<feature type="compositionally biased region" description="Polar residues" evidence="4">
    <location>
        <begin position="675"/>
        <end position="685"/>
    </location>
</feature>
<feature type="compositionally biased region" description="Basic and acidic residues" evidence="4">
    <location>
        <begin position="975"/>
        <end position="991"/>
    </location>
</feature>
<feature type="compositionally biased region" description="Basic and acidic residues" evidence="4">
    <location>
        <begin position="1796"/>
        <end position="1830"/>
    </location>
</feature>
<feature type="compositionally biased region" description="Polar residues" evidence="4">
    <location>
        <begin position="2391"/>
        <end position="2411"/>
    </location>
</feature>
<feature type="compositionally biased region" description="Polar residues" evidence="4">
    <location>
        <begin position="3568"/>
        <end position="3579"/>
    </location>
</feature>
<feature type="binding site" evidence="3">
    <location>
        <position position="3306"/>
    </location>
    <ligand>
        <name>Zn(2+)</name>
        <dbReference type="ChEBI" id="CHEBI:29105"/>
        <label>1</label>
    </ligand>
</feature>
<feature type="binding site" evidence="3">
    <location>
        <position position="3309"/>
    </location>
    <ligand>
        <name>Zn(2+)</name>
        <dbReference type="ChEBI" id="CHEBI:29105"/>
        <label>1</label>
    </ligand>
</feature>
<feature type="binding site" evidence="3">
    <location>
        <position position="3321"/>
    </location>
    <ligand>
        <name>Zn(2+)</name>
        <dbReference type="ChEBI" id="CHEBI:29105"/>
        <label>2</label>
    </ligand>
</feature>
<feature type="binding site" evidence="3">
    <location>
        <position position="3324"/>
    </location>
    <ligand>
        <name>Zn(2+)</name>
        <dbReference type="ChEBI" id="CHEBI:29105"/>
        <label>2</label>
    </ligand>
</feature>
<feature type="binding site" evidence="3">
    <location>
        <position position="3330"/>
    </location>
    <ligand>
        <name>Zn(2+)</name>
        <dbReference type="ChEBI" id="CHEBI:29105"/>
        <label>1</label>
    </ligand>
</feature>
<feature type="binding site" evidence="3">
    <location>
        <position position="3333"/>
    </location>
    <ligand>
        <name>Zn(2+)</name>
        <dbReference type="ChEBI" id="CHEBI:29105"/>
        <label>1</label>
    </ligand>
</feature>
<feature type="binding site" evidence="3">
    <location>
        <position position="3343"/>
    </location>
    <ligand>
        <name>Zn(2+)</name>
        <dbReference type="ChEBI" id="CHEBI:29105"/>
        <label>2</label>
    </ligand>
</feature>
<feature type="binding site" evidence="3">
    <location>
        <position position="3347"/>
    </location>
    <ligand>
        <name>Zn(2+)</name>
        <dbReference type="ChEBI" id="CHEBI:29105"/>
        <label>2</label>
    </ligand>
</feature>
<feature type="splice variant" id="VSP_051614" description="In isoform b." evidence="13">
    <location>
        <begin position="1"/>
        <end position="3410"/>
    </location>
</feature>
<feature type="splice variant" id="VSP_051615" description="In isoform b." evidence="13">
    <original>ADTSQMTAHLAKLSAEHGGGAEHMEPVQSPLQIINQ</original>
    <variation>MCSLLKLLKISGKSVSDDDPIERYIKCEQCKCKRHW</variation>
    <location>
        <begin position="3411"/>
        <end position="3446"/>
    </location>
</feature>
<feature type="mutagenesis site" description="In eg33; exhibits increased head-bending compared to wild-type. Leads to mislocalization and disruption of slo-1 puncta in the muscles. Abolishes dystrobrevin (dyb-1) and alpha-catulin (ctn-1) punctate patterns at the muscle membrane." evidence="9 11">
    <location>
        <begin position="3287"/>
        <end position="3674"/>
    </location>
</feature>
<accession>Q9TW65</accession>
<accession>Q9TYG9</accession>
<accession>Q9U3H3</accession>
<proteinExistence type="evidence at protein level"/>
<reference key="1">
    <citation type="journal article" date="1998" name="Neurogenetics">
        <title>Mutations in the Caenorhabditis elegans dystrophin-like gene dys-1 lead to hyperactivity and suggest a link with cholinergic transmission.</title>
        <authorList>
            <person name="Bessou C."/>
            <person name="Giugia J.-B."/>
            <person name="Franks C.J."/>
            <person name="Holden-Dye L."/>
            <person name="Segalat L."/>
        </authorList>
    </citation>
    <scope>NUCLEOTIDE SEQUENCE [MRNA] (ISOFORM A)</scope>
    <scope>FUNCTION</scope>
    <scope>TISSUE SPECIFICITY</scope>
    <scope>DISRUPTION PHENOTYPE</scope>
</reference>
<reference key="2">
    <citation type="journal article" date="1998" name="Science">
        <title>Genome sequence of the nematode C. elegans: a platform for investigating biology.</title>
        <authorList>
            <consortium name="The C. elegans sequencing consortium"/>
        </authorList>
    </citation>
    <scope>NUCLEOTIDE SEQUENCE [LARGE SCALE GENOMIC DNA]</scope>
    <scope>ALTERNATIVE SPLICING</scope>
    <source>
        <strain>Bristol N2</strain>
    </source>
</reference>
<reference key="3">
    <citation type="journal article" date="1999" name="FEBS Lett.">
        <title>In vitro interactions of Caenorhabditis elegans dystrophin with dystrobrevin and syntrophin.</title>
        <authorList>
            <person name="Gieseler K."/>
            <person name="Abdel-Dayem M."/>
            <person name="Segalat L."/>
        </authorList>
    </citation>
    <scope>INTERACTION WITH DYB-1 AND STN-1</scope>
</reference>
<reference key="4">
    <citation type="journal article" date="1999" name="Neurogenetics">
        <title>Dystrobrevin- and dystrophin-like mutants display similar phenotypes in the nematode Caenorhabditis elegans.</title>
        <authorList>
            <person name="Gieseler K."/>
            <person name="Bessou C."/>
            <person name="Segalat L."/>
        </authorList>
    </citation>
    <scope>FUNCTION</scope>
    <scope>DISRUPTION PHENOTYPE</scope>
</reference>
<reference key="5">
    <citation type="journal article" date="2000" name="Curr. Biol.">
        <title>Genetic suppression of phenotypes arising from mutations in dystrophin-related genes in Caenorhabditis elegans.</title>
        <authorList>
            <person name="Gieseler K."/>
            <person name="Grisoni K."/>
            <person name="Segalat L."/>
        </authorList>
    </citation>
    <scope>FUNCTION</scope>
    <scope>DISRUPTION PHENOTYPE</scope>
</reference>
<reference key="6">
    <citation type="journal article" date="2002" name="Gene">
        <title>Genetic evidence for a dystrophin-glycoprotein complex (DGC) in Caenorhabditis elegans.</title>
        <authorList>
            <person name="Grisoni K."/>
            <person name="Martin E."/>
            <person name="Gieseler K."/>
            <person name="Mariol M.-C."/>
            <person name="Segalat L."/>
        </authorList>
    </citation>
    <scope>FUNCTION</scope>
</reference>
<reference evidence="13" key="7">
    <citation type="journal article" date="2010" name="PLoS Genet.">
        <title>An alpha-catulin homologue controls neuromuscular function through localization of the dystrophin complex and BK channels in Caenorhabditis elegans.</title>
        <authorList>
            <person name="Abraham L.S."/>
            <person name="Oh H.J."/>
            <person name="Sancar F."/>
            <person name="Richmond J.E."/>
            <person name="Kim H."/>
        </authorList>
    </citation>
    <scope>FUNCTION</scope>
    <scope>MUTAGENESIS OF 3050-THR--ASP-3674</scope>
</reference>
<reference key="8">
    <citation type="journal article" date="2011" name="J. Cell Biol.">
        <title>Neural integrity is maintained by dystrophin in C. elegans.</title>
        <authorList>
            <person name="Zhou S."/>
            <person name="Chen L."/>
        </authorList>
    </citation>
    <scope>FUNCTION</scope>
    <scope>INTERACTION WITH STN-2</scope>
    <scope>DISRUPTION PHENOTYPE</scope>
</reference>
<reference evidence="13" key="9">
    <citation type="journal article" date="2012" name="J. Biol. Chem.">
        <title>Interaction of alpha-catulin with dystrobrevin contributes to integrity of dystrophin complex in muscle.</title>
        <authorList>
            <person name="Oh H.J."/>
            <person name="Abraham L.S."/>
            <person name="van Hengel J."/>
            <person name="Stove C."/>
            <person name="Proszynski T.J."/>
            <person name="Gevaert K."/>
            <person name="DiMario J.X."/>
            <person name="Sanes J.R."/>
            <person name="van Roy F."/>
            <person name="Kim H."/>
        </authorList>
    </citation>
    <scope>MUTAGENESIS OF 3050-THR--ASP-3674</scope>
</reference>
<sequence length="3674" mass="417427">MLFSGASTAKPKKDEKKDKKSDRDPKNELQEWVFVRWANHLLGTERLTDYKSLQDGSNAIFVYQAIIGQTMAVLGNPSDDWPNVLQNIGDSKTNPQEVMEGQQKAVLSAWWQLVQFFWKNNAPVQLREEKLSEAIKQWCIEVMKSYEEIDVYDFTSSFRDGHAFNYLIHSYDRKLINLTKTAEMSAIDRIENAFAVAEKTWNVPRLLNPKDLHSDQLDSHSVLCYLMSLYLAMISTSKIETELEAQQIQQQKVAALLASHKMLSSQPSTSSSSALQIPPQTPPTAHHQAMLDRGKSFEQSAEGEVRSRKSSSSSQKSGKSKKARREEQLAEFKSCIEQVLTWLLEAEDELTTLTQMPRVELASVRSQFSDFESFMSSLTDSQDTVGRVLLRGQMLSNKSESEEEKESIGANLHLVNTRWEALREQAMQEQAVLQQQIHLLQQSELDTISQWLDAAELEIESFGPLAADSSQALRQIELHTKFQQKLNDFQETIDKLESFVAVVDEENDASVATLEDALSAVSVRWGHVCEWAEKRATKLDGLADLLDKTNEVFENLSGWLAERENELMTGLKSAHHLENEEQVAQQVRRLQKTEEQLEQEHASFVRLSQLSCELVGRLDDSNGAAANAVRLSLDSITQRWDNLVARIEEHGKTLVKSGKADVKQVQESQNEQKEQPASSEGLSTDTEGEEQKNQLVDKFLLHISKLSHELEPLQDWSEKFEVSRKKDDIRKMMNTCQEKLIQIKEQEARVNRLQLELEHLHVAKLNARQLKRANDAFEQFAKGWARIVTKISEAMNVLTGQEAGGNGNGSEEAAVAAKIEQWIEAVDKVINELSQLPVNERRSRIDKLEQQLQVQDKNVGFIEKDLLKKAILKKGLEIAGKRLAALKVEEKPVEKEEQLVLSNSEEPEAEKHVTFVQETTEKPAPLQEPTSEAQLLEELDGPWSRVGDVVAIEHDLLRAKRAVDTARNSQMSNETVEKAETRKAEMEEKRRVTMSARSKFRMAEETLEEIERNLDRLQVSDLEIADLVRGLEQEAAKLGERVSQRKEAERTAEKILSMDDDEISQEIVIKTKDSTEKLIKRWNQLELDLEENLRKAKRDQDVFIQKRLREGEEALNEIKTAIEGKRESLDAETAAENLDHLESSLDNISSLFGEIGSLPMDDNSREKLSKLAKAKDQITARANEALAALTRTVSECEDFEKQIMLFQNWSARIGFLLQARKSADISAFDIPHEYHEDLGNEAELIPKLSREFEEWTVKLNEMNSTATEKDDSARMREQLNHANETMAELKRKFNEFKRPKGFEEKLEKVITTLSNVEMGLDDTTGIDGSECGGALMEVRALVRMLDGAQEKWKDLAENREQLVKDRVLDEETSKETLQKLQYAKTKSKELYERSSTCIERLEDCVEMYQRLKMESDEIERFLEEMEGKLDQYAASDRPEEAEIVNELISEWNRNEAAMKNAEHLQRQLNERAIKIPDDVLSLKRLRADALKNRLNSWCRTIQEMSEDDESALLEIDELHQNLEKELKLVSDKEPSKIAEKLRFLRADRDRLSSRTRKLAAKNPRLAATSSDVLAGLNQKWKELEVKASAEKAPAPELRDARLSSPSEQPFDKRVQELCDLFENLEAQLDFNGSPVSMVTEYQKRVENLDEYLDEYRPALDDTIEEGRKIAETGRLELQTHSAIEKLDELTNRIEQVEVELDKHRDKVPSLVEQHEQLKKDIDSFLLVLDVFTDRNLDDVDIAKSTRKELAERDSHIVSLTSRATAIHCALPGKGPQLHDVTLDKLRDRIEKLEARLSATEKKPVETVKSTIPDRPEVPEEPEKSSPDRTSRSSLQLAMEAYGTATEDDSVISEAVTVGQKSVDQVDPVEQLEPVEPVEPKLEVKQLKDEATEEEEKRTIILPDETEKVIETIPAARPSAGPSEGTVAEVSTSEILKARPAQESIERTVREVPVDEYEETANISSGDELQDHKISSAVPDSESEIASMFEVLDSIEDSHTNFEEFPFDYLDSADDDLKKTLLKLESCEKTLAKNEMTINIAQAENARERITMLRQMALQRKDKLPKFNEEWNAMQELIQLADALVDEAERYESDQIPQMDRKSAPNVLGELRKRVANAEGPVIDLVKKLSQLVPRMQEDSPKSQDIRQKVYGIEDRFRRVGQAEGAAISKALSSALTEPELKLELDEVVRWCEMAEKEAAQNVNSLDGDGLEKLDGRLAQFTKELQERKDDMVQLEMAKNMIIPSLKGDAHHDLRRNFSDTAKRVAMVRDELSDAHKWVATSRDTCDTFWADIDSLEQLARDVVRRANGIRMAVIYTPSRENVEGVLRDVQRLKMSIGDVKKRVQTANLPPAIKLAGKNAKRVVQVLTETATTIADCHDIPTYLIDEMNDSGGDTTESRSTVVEMTSVHTKQSSSSSSNKTPSAGGESDDAHTLNGDDEQSEEDQKIYSRESSSTLPRGVSSLGSTGSSGVLDPVAVQLTHTRHWLHDVERDASITVDLAQWQPARELWQSIQGIIDEIRLRSVHVTGAHDASPNRQVRQQAAQLLTEMRRTIENCEKRCLILNQISDIARQNEASRNEMELWLKSASDVIGERRVEELSEEVVRQELQVLERVVEQLTERKDKMAEINSQANKIVDTYTKDEAHNLSHLLSRLNMSWTKFNDNIRIRRAVLEASLRSRRDFHSALSEFEKWLSRQEDNCSKLSADTSNHQAIKDTSKRKNWTQSFKTLNAELNAHEDVMKSVEKMGKMLAESLESGNEKVELLKRVGETTRRWTALRKTTNEIGERLEKAEQEWEKLSDGLADLLSWVEAKKQAIMDEQPTGGSLSAVMQQASFVKGLQREIESKTANYKSTVEEAHSFLMQHDLRPKLHSPHVLDDDYEKEELANLEQRRRGLEINANCERLKKNWAELGIEVESWDKLVQHAMQRLQELERNLAECQLHLTSSENEIETMKAVEKIHLEDLKIAREETDQISKRIDEVRLFVDDVNDAAARLLAEDLKLDEHAKGQIEHVNKRYSTLKRAIRIRQAAVRNAASDFGPTSEHFLNQSVTLPWQRAISKSNLLPYYIEQTSEKTQWEHPVWVEIVKELSQFNRVKFLAYRTAMKLRALQKRLCLDLVDLTLLEKAFVRLKGLSAEECPGLEGMVCALLPMYEALHAKYPNQVQSVSLAVDICINFLLNLFDQSRDGIMRVLSFKIAMIVFSNIPLEEKYRYLFKLVSQDGHATQKQIALLLYDLIHIPRLVGESAAFGGTNVEPSVRSCFETVRLAPTISEGAFIDWVKKEPQSIVWLAVMHRLVISESTKHASKCNVCKMFPIIGIRYRCLTCFNCDLCQNCFFSQRTAKSHRTNHPMQEYCEKTTSSDDARDFAKMIRNKFRASKRQKGYLPIDVAEEGIPLTCPPAKVTNQATEQMNADTSQMTAHLAKLSAEHGGGAEHMEPVQSPLQIINQVEQLQRDEMDQMLHRLQFENKQLRKELEWKRGAASTMEIDRSSKRHQERHQSESRGGTLPLRNGRSVVSLKSTQSQNDVMDEAKALRLHKQRLEHRSRILEQQNEQLEMQLQRLKKVIDAQKQQAPLSTNSLLRGSHHQPWSPERARSGSASTLDRGLIVSSRHQEQAEAAGGGAEDSSDEAGGAGGGPRGSSVGQMQNLMTACDDLGKAMESLVVSVVYDSDDEEND</sequence>
<protein>
    <recommendedName>
        <fullName>Dystrophin-1</fullName>
    </recommendedName>
</protein>
<dbReference type="EMBL" id="AJ012469">
    <property type="protein sequence ID" value="CAA10033.1"/>
    <property type="molecule type" value="mRNA"/>
</dbReference>
<dbReference type="EMBL" id="Z81063">
    <property type="protein sequence ID" value="CAB61012.2"/>
    <property type="molecule type" value="Genomic_DNA"/>
</dbReference>
<dbReference type="EMBL" id="Z81522">
    <property type="protein sequence ID" value="CAB61012.2"/>
    <property type="status" value="JOINED"/>
    <property type="molecule type" value="Genomic_DNA"/>
</dbReference>
<dbReference type="EMBL" id="Z81522">
    <property type="protein sequence ID" value="CAB61004.1"/>
    <property type="molecule type" value="Genomic_DNA"/>
</dbReference>
<dbReference type="PIR" id="T21635">
    <property type="entry name" value="T21635"/>
</dbReference>
<dbReference type="RefSeq" id="NP_492946.1">
    <molecule id="Q9TW65-1"/>
    <property type="nucleotide sequence ID" value="NM_060545.7"/>
</dbReference>
<dbReference type="RefSeq" id="NP_492947.1">
    <molecule id="Q9TW65-2"/>
    <property type="nucleotide sequence ID" value="NM_060546.8"/>
</dbReference>
<dbReference type="SMR" id="Q9TW65"/>
<dbReference type="BioGRID" id="38445">
    <property type="interactions" value="7"/>
</dbReference>
<dbReference type="FunCoup" id="Q9TW65">
    <property type="interactions" value="949"/>
</dbReference>
<dbReference type="IntAct" id="Q9TW65">
    <property type="interactions" value="3"/>
</dbReference>
<dbReference type="STRING" id="6239.F15D3.1a.1"/>
<dbReference type="TCDB" id="8.A.66.1.1">
    <property type="family name" value="the dystrophin (dystrophin) family"/>
</dbReference>
<dbReference type="iPTMnet" id="Q9TW65"/>
<dbReference type="PaxDb" id="6239-F15D3.1a"/>
<dbReference type="PeptideAtlas" id="Q9TW65"/>
<dbReference type="EnsemblMetazoa" id="F15D3.1a.1">
    <molecule id="Q9TW65-1"/>
    <property type="protein sequence ID" value="F15D3.1a.1"/>
    <property type="gene ID" value="WBGene00001131"/>
</dbReference>
<dbReference type="EnsemblMetazoa" id="F15D3.1b.1">
    <molecule id="Q9TW65-2"/>
    <property type="protein sequence ID" value="F15D3.1b.1"/>
    <property type="gene ID" value="WBGene00001131"/>
</dbReference>
<dbReference type="GeneID" id="173038"/>
<dbReference type="KEGG" id="cel:CELE_F15D3.1"/>
<dbReference type="UCSC" id="F15D3.1b">
    <molecule id="Q9TW65-1"/>
    <property type="organism name" value="c. elegans"/>
</dbReference>
<dbReference type="AGR" id="WB:WBGene00001131"/>
<dbReference type="CTD" id="173038"/>
<dbReference type="WormBase" id="F15D3.1a">
    <molecule id="Q9TW65-1"/>
    <property type="protein sequence ID" value="CE27129"/>
    <property type="gene ID" value="WBGene00001131"/>
    <property type="gene designation" value="dys-1"/>
</dbReference>
<dbReference type="WormBase" id="F15D3.1b">
    <molecule id="Q9TW65-2"/>
    <property type="protein sequence ID" value="CE24904"/>
    <property type="gene ID" value="WBGene00001131"/>
    <property type="gene designation" value="dys-1"/>
</dbReference>
<dbReference type="eggNOG" id="KOG4286">
    <property type="taxonomic scope" value="Eukaryota"/>
</dbReference>
<dbReference type="HOGENOM" id="CLU_000246_3_0_1"/>
<dbReference type="InParanoid" id="Q9TW65"/>
<dbReference type="OMA" id="NWSARIG"/>
<dbReference type="OrthoDB" id="10057795at2759"/>
<dbReference type="PhylomeDB" id="Q9TW65"/>
<dbReference type="Reactome" id="R-CEL-9913351">
    <property type="pathway name" value="Formation of the dystrophin-glycoprotein complex (DGC)"/>
</dbReference>
<dbReference type="PRO" id="PR:Q9TW65"/>
<dbReference type="Proteomes" id="UP000001940">
    <property type="component" value="Chromosome I"/>
</dbReference>
<dbReference type="Bgee" id="WBGene00001131">
    <property type="expression patterns" value="Expressed in pharyngeal muscle cell (C elegans) and 4 other cell types or tissues"/>
</dbReference>
<dbReference type="ExpressionAtlas" id="Q9TW65">
    <property type="expression patterns" value="baseline and differential"/>
</dbReference>
<dbReference type="GO" id="GO:0005856">
    <property type="term" value="C:cytoskeleton"/>
    <property type="evidence" value="ECO:0007669"/>
    <property type="project" value="UniProtKB-SubCell"/>
</dbReference>
<dbReference type="GO" id="GO:0016014">
    <property type="term" value="C:dystrobrevin complex"/>
    <property type="evidence" value="ECO:0000353"/>
    <property type="project" value="WormBase"/>
</dbReference>
<dbReference type="GO" id="GO:0016010">
    <property type="term" value="C:dystrophin-associated glycoprotein complex"/>
    <property type="evidence" value="ECO:0000314"/>
    <property type="project" value="UniProtKB"/>
</dbReference>
<dbReference type="GO" id="GO:0005886">
    <property type="term" value="C:plasma membrane"/>
    <property type="evidence" value="ECO:0000318"/>
    <property type="project" value="GO_Central"/>
</dbReference>
<dbReference type="GO" id="GO:0042383">
    <property type="term" value="C:sarcolemma"/>
    <property type="evidence" value="ECO:0007669"/>
    <property type="project" value="UniProtKB-SubCell"/>
</dbReference>
<dbReference type="GO" id="GO:0055120">
    <property type="term" value="C:striated muscle dense body"/>
    <property type="evidence" value="ECO:0000314"/>
    <property type="project" value="WormBase"/>
</dbReference>
<dbReference type="GO" id="GO:0045202">
    <property type="term" value="C:synapse"/>
    <property type="evidence" value="ECO:0007669"/>
    <property type="project" value="GOC"/>
</dbReference>
<dbReference type="GO" id="GO:0003779">
    <property type="term" value="F:actin binding"/>
    <property type="evidence" value="ECO:0007669"/>
    <property type="project" value="UniProtKB-KW"/>
</dbReference>
<dbReference type="GO" id="GO:0008270">
    <property type="term" value="F:zinc ion binding"/>
    <property type="evidence" value="ECO:0007669"/>
    <property type="project" value="UniProtKB-KW"/>
</dbReference>
<dbReference type="GO" id="GO:0015870">
    <property type="term" value="P:acetylcholine transport"/>
    <property type="evidence" value="ECO:0000315"/>
    <property type="project" value="UniProtKB"/>
</dbReference>
<dbReference type="GO" id="GO:0043056">
    <property type="term" value="P:forward locomotion"/>
    <property type="evidence" value="ECO:0000315"/>
    <property type="project" value="WormBase"/>
</dbReference>
<dbReference type="GO" id="GO:0007626">
    <property type="term" value="P:locomotory behavior"/>
    <property type="evidence" value="ECO:0000315"/>
    <property type="project" value="WormBase"/>
</dbReference>
<dbReference type="GO" id="GO:0046716">
    <property type="term" value="P:muscle cell cellular homeostasis"/>
    <property type="evidence" value="ECO:0000315"/>
    <property type="project" value="UniProtKB"/>
</dbReference>
<dbReference type="GO" id="GO:0040017">
    <property type="term" value="P:positive regulation of locomotion"/>
    <property type="evidence" value="ECO:0000315"/>
    <property type="project" value="UniProtKB"/>
</dbReference>
<dbReference type="GO" id="GO:0032224">
    <property type="term" value="P:positive regulation of synaptic transmission, cholinergic"/>
    <property type="evidence" value="ECO:0000315"/>
    <property type="project" value="WormBase"/>
</dbReference>
<dbReference type="GO" id="GO:0045214">
    <property type="term" value="P:sarcomere organization"/>
    <property type="evidence" value="ECO:0000316"/>
    <property type="project" value="WormBase"/>
</dbReference>
<dbReference type="GO" id="GO:0099536">
    <property type="term" value="P:synaptic signaling"/>
    <property type="evidence" value="ECO:0000318"/>
    <property type="project" value="GO_Central"/>
</dbReference>
<dbReference type="GO" id="GO:0007271">
    <property type="term" value="P:synaptic transmission, cholinergic"/>
    <property type="evidence" value="ECO:0000315"/>
    <property type="project" value="UniProtKB"/>
</dbReference>
<dbReference type="CDD" id="cd16242">
    <property type="entry name" value="EFh_DMD_like"/>
    <property type="match status" value="1"/>
</dbReference>
<dbReference type="CDD" id="cd00176">
    <property type="entry name" value="SPEC"/>
    <property type="match status" value="3"/>
</dbReference>
<dbReference type="CDD" id="cd00201">
    <property type="entry name" value="WW"/>
    <property type="match status" value="1"/>
</dbReference>
<dbReference type="CDD" id="cd02334">
    <property type="entry name" value="ZZ_dystrophin"/>
    <property type="match status" value="1"/>
</dbReference>
<dbReference type="Gene3D" id="1.20.58.60">
    <property type="match status" value="7"/>
</dbReference>
<dbReference type="Gene3D" id="2.20.70.10">
    <property type="match status" value="1"/>
</dbReference>
<dbReference type="Gene3D" id="3.30.60.90">
    <property type="match status" value="1"/>
</dbReference>
<dbReference type="Gene3D" id="1.10.418.10">
    <property type="entry name" value="Calponin-like domain"/>
    <property type="match status" value="1"/>
</dbReference>
<dbReference type="Gene3D" id="1.10.238.10">
    <property type="entry name" value="EF-hand"/>
    <property type="match status" value="2"/>
</dbReference>
<dbReference type="InterPro" id="IPR001589">
    <property type="entry name" value="Actinin_actin-bd_CS"/>
</dbReference>
<dbReference type="InterPro" id="IPR001715">
    <property type="entry name" value="CH_dom"/>
</dbReference>
<dbReference type="InterPro" id="IPR036872">
    <property type="entry name" value="CH_dom_sf"/>
</dbReference>
<dbReference type="InterPro" id="IPR011992">
    <property type="entry name" value="EF-hand-dom_pair"/>
</dbReference>
<dbReference type="InterPro" id="IPR015153">
    <property type="entry name" value="EF-hand_dom_typ1"/>
</dbReference>
<dbReference type="InterPro" id="IPR015154">
    <property type="entry name" value="EF-hand_dom_typ2"/>
</dbReference>
<dbReference type="InterPro" id="IPR050774">
    <property type="entry name" value="KCMF1/Dystrophin"/>
</dbReference>
<dbReference type="InterPro" id="IPR018159">
    <property type="entry name" value="Spectrin/alpha-actinin"/>
</dbReference>
<dbReference type="InterPro" id="IPR056503">
    <property type="entry name" value="Spectrin_Dys-1"/>
</dbReference>
<dbReference type="InterPro" id="IPR002017">
    <property type="entry name" value="Spectrin_repeat"/>
</dbReference>
<dbReference type="InterPro" id="IPR001202">
    <property type="entry name" value="WW_dom"/>
</dbReference>
<dbReference type="InterPro" id="IPR036020">
    <property type="entry name" value="WW_dom_sf"/>
</dbReference>
<dbReference type="InterPro" id="IPR013087">
    <property type="entry name" value="Znf_C2H2_type"/>
</dbReference>
<dbReference type="InterPro" id="IPR000433">
    <property type="entry name" value="Znf_ZZ"/>
</dbReference>
<dbReference type="InterPro" id="IPR043145">
    <property type="entry name" value="Znf_ZZ_sf"/>
</dbReference>
<dbReference type="PANTHER" id="PTHR12268:SF14">
    <property type="entry name" value="DYSTROPHIN-1"/>
    <property type="match status" value="1"/>
</dbReference>
<dbReference type="PANTHER" id="PTHR12268">
    <property type="entry name" value="E3 UBIQUITIN-PROTEIN LIGASE KCMF1"/>
    <property type="match status" value="1"/>
</dbReference>
<dbReference type="Pfam" id="PF00307">
    <property type="entry name" value="CH"/>
    <property type="match status" value="1"/>
</dbReference>
<dbReference type="Pfam" id="PF09068">
    <property type="entry name" value="EF-hand_2"/>
    <property type="match status" value="1"/>
</dbReference>
<dbReference type="Pfam" id="PF09069">
    <property type="entry name" value="EF-hand_3"/>
    <property type="match status" value="1"/>
</dbReference>
<dbReference type="Pfam" id="PF00435">
    <property type="entry name" value="Spectrin"/>
    <property type="match status" value="2"/>
</dbReference>
<dbReference type="Pfam" id="PF23729">
    <property type="entry name" value="Spectrin_Dys-1"/>
    <property type="match status" value="1"/>
</dbReference>
<dbReference type="Pfam" id="PF00569">
    <property type="entry name" value="ZZ"/>
    <property type="match status" value="1"/>
</dbReference>
<dbReference type="SMART" id="SM00033">
    <property type="entry name" value="CH"/>
    <property type="match status" value="1"/>
</dbReference>
<dbReference type="SMART" id="SM00150">
    <property type="entry name" value="SPEC"/>
    <property type="match status" value="7"/>
</dbReference>
<dbReference type="SMART" id="SM00456">
    <property type="entry name" value="WW"/>
    <property type="match status" value="1"/>
</dbReference>
<dbReference type="SMART" id="SM00291">
    <property type="entry name" value="ZnF_ZZ"/>
    <property type="match status" value="1"/>
</dbReference>
<dbReference type="SUPFAM" id="SSF47576">
    <property type="entry name" value="Calponin-homology domain, CH-domain"/>
    <property type="match status" value="1"/>
</dbReference>
<dbReference type="SUPFAM" id="SSF47473">
    <property type="entry name" value="EF-hand"/>
    <property type="match status" value="2"/>
</dbReference>
<dbReference type="SUPFAM" id="SSF57850">
    <property type="entry name" value="RING/U-box"/>
    <property type="match status" value="1"/>
</dbReference>
<dbReference type="SUPFAM" id="SSF46966">
    <property type="entry name" value="Spectrin repeat"/>
    <property type="match status" value="6"/>
</dbReference>
<dbReference type="SUPFAM" id="SSF51045">
    <property type="entry name" value="WW domain"/>
    <property type="match status" value="1"/>
</dbReference>
<dbReference type="PROSITE" id="PS00019">
    <property type="entry name" value="ACTININ_1"/>
    <property type="match status" value="1"/>
</dbReference>
<dbReference type="PROSITE" id="PS50021">
    <property type="entry name" value="CH"/>
    <property type="match status" value="1"/>
</dbReference>
<dbReference type="PROSITE" id="PS01159">
    <property type="entry name" value="WW_DOMAIN_1"/>
    <property type="match status" value="1"/>
</dbReference>
<dbReference type="PROSITE" id="PS50020">
    <property type="entry name" value="WW_DOMAIN_2"/>
    <property type="match status" value="1"/>
</dbReference>
<dbReference type="PROSITE" id="PS50135">
    <property type="entry name" value="ZF_ZZ_2"/>
    <property type="match status" value="1"/>
</dbReference>
<organism>
    <name type="scientific">Caenorhabditis elegans</name>
    <dbReference type="NCBI Taxonomy" id="6239"/>
    <lineage>
        <taxon>Eukaryota</taxon>
        <taxon>Metazoa</taxon>
        <taxon>Ecdysozoa</taxon>
        <taxon>Nematoda</taxon>
        <taxon>Chromadorea</taxon>
        <taxon>Rhabditida</taxon>
        <taxon>Rhabditina</taxon>
        <taxon>Rhabditomorpha</taxon>
        <taxon>Rhabditoidea</taxon>
        <taxon>Rhabditidae</taxon>
        <taxon>Peloderinae</taxon>
        <taxon>Caenorhabditis</taxon>
    </lineage>
</organism>
<gene>
    <name type="primary">dys-1</name>
    <name type="ORF">F15D3.1</name>
</gene>
<keyword id="KW-0009">Actin-binding</keyword>
<keyword id="KW-0025">Alternative splicing</keyword>
<keyword id="KW-0106">Calcium</keyword>
<keyword id="KW-1003">Cell membrane</keyword>
<keyword id="KW-0963">Cytoplasm</keyword>
<keyword id="KW-0206">Cytoskeleton</keyword>
<keyword id="KW-0472">Membrane</keyword>
<keyword id="KW-0479">Metal-binding</keyword>
<keyword id="KW-1185">Reference proteome</keyword>
<keyword id="KW-0677">Repeat</keyword>
<keyword id="KW-0862">Zinc</keyword>
<keyword id="KW-0863">Zinc-finger</keyword>